<gene>
    <name evidence="1" type="primary">smpB</name>
    <name type="ordered locus">alr5070</name>
</gene>
<dbReference type="EMBL" id="BA000019">
    <property type="protein sequence ID" value="BAB76769.1"/>
    <property type="molecule type" value="Genomic_DNA"/>
</dbReference>
<dbReference type="PIR" id="AF2439">
    <property type="entry name" value="AF2439"/>
</dbReference>
<dbReference type="RefSeq" id="WP_010999196.1">
    <property type="nucleotide sequence ID" value="NZ_RSCN01000014.1"/>
</dbReference>
<dbReference type="SMR" id="Q8YM70"/>
<dbReference type="STRING" id="103690.gene:10497128"/>
<dbReference type="KEGG" id="ana:alr5070"/>
<dbReference type="eggNOG" id="COG0691">
    <property type="taxonomic scope" value="Bacteria"/>
</dbReference>
<dbReference type="OrthoDB" id="9805462at2"/>
<dbReference type="Proteomes" id="UP000002483">
    <property type="component" value="Chromosome"/>
</dbReference>
<dbReference type="GO" id="GO:0005829">
    <property type="term" value="C:cytosol"/>
    <property type="evidence" value="ECO:0007669"/>
    <property type="project" value="TreeGrafter"/>
</dbReference>
<dbReference type="GO" id="GO:0003723">
    <property type="term" value="F:RNA binding"/>
    <property type="evidence" value="ECO:0007669"/>
    <property type="project" value="UniProtKB-UniRule"/>
</dbReference>
<dbReference type="GO" id="GO:0070929">
    <property type="term" value="P:trans-translation"/>
    <property type="evidence" value="ECO:0007669"/>
    <property type="project" value="UniProtKB-UniRule"/>
</dbReference>
<dbReference type="CDD" id="cd09294">
    <property type="entry name" value="SmpB"/>
    <property type="match status" value="1"/>
</dbReference>
<dbReference type="Gene3D" id="2.40.280.10">
    <property type="match status" value="1"/>
</dbReference>
<dbReference type="HAMAP" id="MF_00023">
    <property type="entry name" value="SmpB"/>
    <property type="match status" value="1"/>
</dbReference>
<dbReference type="InterPro" id="IPR023620">
    <property type="entry name" value="SmpB"/>
</dbReference>
<dbReference type="InterPro" id="IPR000037">
    <property type="entry name" value="SsrA-bd_prot"/>
</dbReference>
<dbReference type="InterPro" id="IPR020081">
    <property type="entry name" value="SsrA-bd_prot_CS"/>
</dbReference>
<dbReference type="NCBIfam" id="NF003843">
    <property type="entry name" value="PRK05422.1"/>
    <property type="match status" value="1"/>
</dbReference>
<dbReference type="NCBIfam" id="TIGR00086">
    <property type="entry name" value="smpB"/>
    <property type="match status" value="1"/>
</dbReference>
<dbReference type="PANTHER" id="PTHR30308:SF2">
    <property type="entry name" value="SSRA-BINDING PROTEIN"/>
    <property type="match status" value="1"/>
</dbReference>
<dbReference type="PANTHER" id="PTHR30308">
    <property type="entry name" value="TMRNA-BINDING COMPONENT OF TRANS-TRANSLATION TAGGING COMPLEX"/>
    <property type="match status" value="1"/>
</dbReference>
<dbReference type="Pfam" id="PF01668">
    <property type="entry name" value="SmpB"/>
    <property type="match status" value="1"/>
</dbReference>
<dbReference type="SUPFAM" id="SSF74982">
    <property type="entry name" value="Small protein B (SmpB)"/>
    <property type="match status" value="1"/>
</dbReference>
<dbReference type="PROSITE" id="PS01317">
    <property type="entry name" value="SSRP"/>
    <property type="match status" value="1"/>
</dbReference>
<reference key="1">
    <citation type="journal article" date="2001" name="DNA Res.">
        <title>Complete genomic sequence of the filamentous nitrogen-fixing cyanobacterium Anabaena sp. strain PCC 7120.</title>
        <authorList>
            <person name="Kaneko T."/>
            <person name="Nakamura Y."/>
            <person name="Wolk C.P."/>
            <person name="Kuritz T."/>
            <person name="Sasamoto S."/>
            <person name="Watanabe A."/>
            <person name="Iriguchi M."/>
            <person name="Ishikawa A."/>
            <person name="Kawashima K."/>
            <person name="Kimura T."/>
            <person name="Kishida Y."/>
            <person name="Kohara M."/>
            <person name="Matsumoto M."/>
            <person name="Matsuno A."/>
            <person name="Muraki A."/>
            <person name="Nakazaki N."/>
            <person name="Shimpo S."/>
            <person name="Sugimoto M."/>
            <person name="Takazawa M."/>
            <person name="Yamada M."/>
            <person name="Yasuda M."/>
            <person name="Tabata S."/>
        </authorList>
    </citation>
    <scope>NUCLEOTIDE SEQUENCE [LARGE SCALE GENOMIC DNA]</scope>
    <source>
        <strain>PCC 7120 / SAG 25.82 / UTEX 2576</strain>
    </source>
</reference>
<feature type="chain" id="PRO_0000102893" description="SsrA-binding protein">
    <location>
        <begin position="1"/>
        <end position="155"/>
    </location>
</feature>
<feature type="region of interest" description="Disordered" evidence="2">
    <location>
        <begin position="136"/>
        <end position="155"/>
    </location>
</feature>
<accession>Q8YM70</accession>
<protein>
    <recommendedName>
        <fullName evidence="1">SsrA-binding protein</fullName>
    </recommendedName>
    <alternativeName>
        <fullName evidence="1">Small protein B</fullName>
    </alternativeName>
</protein>
<evidence type="ECO:0000255" key="1">
    <source>
        <dbReference type="HAMAP-Rule" id="MF_00023"/>
    </source>
</evidence>
<evidence type="ECO:0000256" key="2">
    <source>
        <dbReference type="SAM" id="MobiDB-lite"/>
    </source>
</evidence>
<comment type="function">
    <text evidence="1">Required for rescue of stalled ribosomes mediated by trans-translation. Binds to transfer-messenger RNA (tmRNA), required for stable association of tmRNA with ribosomes. tmRNA and SmpB together mimic tRNA shape, replacing the anticodon stem-loop with SmpB. tmRNA is encoded by the ssrA gene; the 2 termini fold to resemble tRNA(Ala) and it encodes a 'tag peptide', a short internal open reading frame. During trans-translation Ala-aminoacylated tmRNA acts like a tRNA, entering the A-site of stalled ribosomes, displacing the stalled mRNA. The ribosome then switches to translate the ORF on the tmRNA; the nascent peptide is terminated with the 'tag peptide' encoded by the tmRNA and targeted for degradation. The ribosome is freed to recommence translation, which seems to be the essential function of trans-translation.</text>
</comment>
<comment type="subcellular location">
    <subcellularLocation>
        <location evidence="1">Cytoplasm</location>
    </subcellularLocation>
    <text evidence="1">The tmRNA-SmpB complex associates with stalled 70S ribosomes.</text>
</comment>
<comment type="similarity">
    <text evidence="1">Belongs to the SmpB family.</text>
</comment>
<sequence length="155" mass="18173">MSDKSESYKVITDNRQARYLYEILETFEAGIQLTGTEVKSIRAGKVNLQDGYALLRDGEIWLINAHISPYNASGQYFNHEPRRTRKLLLHRQEIRKLIGKVEQQGLTLVPLKMYLKRGWVKVSIALGKGKKLHDKRESLKRRQDQRDMQRAMKNY</sequence>
<organism>
    <name type="scientific">Nostoc sp. (strain PCC 7120 / SAG 25.82 / UTEX 2576)</name>
    <dbReference type="NCBI Taxonomy" id="103690"/>
    <lineage>
        <taxon>Bacteria</taxon>
        <taxon>Bacillati</taxon>
        <taxon>Cyanobacteriota</taxon>
        <taxon>Cyanophyceae</taxon>
        <taxon>Nostocales</taxon>
        <taxon>Nostocaceae</taxon>
        <taxon>Nostoc</taxon>
    </lineage>
</organism>
<keyword id="KW-0963">Cytoplasm</keyword>
<keyword id="KW-1185">Reference proteome</keyword>
<keyword id="KW-0694">RNA-binding</keyword>
<name>SSRP_NOSS1</name>
<proteinExistence type="inferred from homology"/>